<evidence type="ECO:0000250" key="1">
    <source>
        <dbReference type="UniProtKB" id="P07616"/>
    </source>
</evidence>
<evidence type="ECO:0000305" key="2"/>
<organismHost>
    <name type="scientific">Homo sapiens</name>
    <name type="common">Human</name>
    <dbReference type="NCBI Taxonomy" id="9606"/>
</organismHost>
<dbReference type="EMBL" id="X67119">
    <property type="protein sequence ID" value="CAA47577.1"/>
    <property type="molecule type" value="Genomic_DNA"/>
</dbReference>
<dbReference type="EMBL" id="S55844">
    <property type="protein sequence ID" value="AAB24674.1"/>
    <property type="molecule type" value="Genomic_DNA"/>
</dbReference>
<dbReference type="EMBL" id="X69198">
    <property type="protein sequence ID" value="CAA49019.1"/>
    <property type="molecule type" value="Genomic_DNA"/>
</dbReference>
<dbReference type="PIR" id="S33092">
    <property type="entry name" value="S33092"/>
</dbReference>
<dbReference type="KEGG" id="vg:1486464"/>
<dbReference type="Proteomes" id="UP000002060">
    <property type="component" value="Segment"/>
</dbReference>
<dbReference type="GO" id="GO:0030430">
    <property type="term" value="C:host cell cytoplasm"/>
    <property type="evidence" value="ECO:0007669"/>
    <property type="project" value="UniProtKB-SubCell"/>
</dbReference>
<dbReference type="GO" id="GO:0044423">
    <property type="term" value="C:virion component"/>
    <property type="evidence" value="ECO:0007669"/>
    <property type="project" value="UniProtKB-KW"/>
</dbReference>
<dbReference type="InterPro" id="IPR005006">
    <property type="entry name" value="Poxvirus_J1"/>
</dbReference>
<dbReference type="Pfam" id="PF03338">
    <property type="entry name" value="Pox_J1"/>
    <property type="match status" value="1"/>
</dbReference>
<organism>
    <name type="scientific">Variola virus (isolate Human/India/Ind3/1967)</name>
    <name type="common">VARV</name>
    <name type="synonym">Smallpox virus</name>
    <dbReference type="NCBI Taxonomy" id="587200"/>
    <lineage>
        <taxon>Viruses</taxon>
        <taxon>Varidnaviria</taxon>
        <taxon>Bamfordvirae</taxon>
        <taxon>Nucleocytoviricota</taxon>
        <taxon>Pokkesviricetes</taxon>
        <taxon>Chitovirales</taxon>
        <taxon>Poxviridae</taxon>
        <taxon>Chordopoxvirinae</taxon>
        <taxon>Orthopoxvirus</taxon>
        <taxon>Variola virus</taxon>
    </lineage>
</organism>
<comment type="function">
    <text evidence="1">Late protein which is a part of a large complex required for early virion morphogenesis. This complex participates in the formation of virosomes and the incorporation of virosomal contents into nascent immature virions. Plays a role in DNA packaging during immature virions (IV) formation.</text>
</comment>
<comment type="subunit">
    <text evidence="1">Homodimer. Part of a complex composed of the kinase OPG054, OPG092, OPG114, OPG115, OPG142 and OPG157. Interacts with OPG175.</text>
</comment>
<comment type="subcellular location">
    <subcellularLocation>
        <location evidence="1">Virion</location>
    </subcellularLocation>
    <subcellularLocation>
        <location evidence="1">Host cytoplasm</location>
    </subcellularLocation>
    <text evidence="1">Localizes in cytoplasmic virus factories. Probably located in between the core and the virion membrane.</text>
</comment>
<comment type="induction">
    <text>Expressed in the late phase of the viral replicative cycle.</text>
</comment>
<comment type="similarity">
    <text evidence="2">Belongs to the orthopoxvirus OPG100 family.</text>
</comment>
<name>PG100_VAR67</name>
<proteinExistence type="evidence at transcript level"/>
<reference key="1">
    <citation type="journal article" date="1993" name="Virus Res.">
        <title>Nucleotide sequence analysis of variola virus HindIII M, L, I genome fragments.</title>
        <authorList>
            <person name="Shchelkunov S.N."/>
            <person name="Blinov V.M."/>
            <person name="Totmenin A.V."/>
            <person name="Marennikova S.S."/>
            <person name="Kolykhalov A.A."/>
            <person name="Frolov I.V."/>
            <person name="Chizhikov V.E."/>
            <person name="Gytorov V.V."/>
            <person name="Gashikov P.V."/>
            <person name="Belanov E.F."/>
            <person name="Belavin P.A."/>
            <person name="Resenchuk S.M."/>
            <person name="Andzhaparidze O.G."/>
            <person name="Sandakhchiev L.S."/>
        </authorList>
    </citation>
    <scope>NUCLEOTIDE SEQUENCE [GENOMIC DNA]</scope>
</reference>
<reference key="2">
    <citation type="journal article" date="1993" name="FEBS Lett.">
        <title>Genes of variola and vaccinia viruses necessary to overcome the host protective mechanisms.</title>
        <authorList>
            <person name="Shchelkunov S.N."/>
            <person name="Blinov V.M."/>
            <person name="Sandakhchiev L.S."/>
        </authorList>
    </citation>
    <scope>NUCLEOTIDE SEQUENCE [LARGE SCALE GENOMIC DNA]</scope>
</reference>
<protein>
    <recommendedName>
        <fullName>Virion assembly protein OPG100</fullName>
    </recommendedName>
    <alternativeName>
        <fullName>Protein J1</fullName>
    </alternativeName>
</protein>
<feature type="chain" id="PRO_0000099589" description="Virion assembly protein OPG100">
    <location>
        <begin position="1"/>
        <end position="159"/>
    </location>
</feature>
<accession>P33004</accession>
<sequence length="159" mass="18483">MDHNQYLLTMFFADDDSFFKYLASQDDESSLSDILQITQYLDFLLLLLIQSKNKLEAVGHCYESLSEEYRQLTKFTDSQDFKKLFNKVPIVTDGRVKLNKGYLFDFVISLMRFKKESALATTAIDPVRYIDPRRDIAFSNVMDILKSNKAKNNYSLLSS</sequence>
<gene>
    <name type="primary">OPG100</name>
    <name type="ORF">J1R</name>
</gene>
<keyword id="KW-1035">Host cytoplasm</keyword>
<keyword id="KW-0426">Late protein</keyword>
<keyword id="KW-1185">Reference proteome</keyword>
<keyword id="KW-0946">Virion</keyword>